<proteinExistence type="inferred from homology"/>
<accession>Q5HQE7</accession>
<feature type="chain" id="PRO_0000308460" description="Processive diacylglycerol beta-glucosyltransferase">
    <location>
        <begin position="1"/>
        <end position="391"/>
    </location>
</feature>
<evidence type="ECO:0000255" key="1">
    <source>
        <dbReference type="HAMAP-Rule" id="MF_01280"/>
    </source>
</evidence>
<protein>
    <recommendedName>
        <fullName evidence="1">Processive diacylglycerol beta-glucosyltransferase</fullName>
        <ecNumber>2.4.1.315</ecNumber>
    </recommendedName>
    <alternativeName>
        <fullName evidence="1">Beta-diglucosyldiacylglycerol synthase</fullName>
        <shortName evidence="1">Beta-DGS</shortName>
        <shortName evidence="1">DGlcDAG synthase</shortName>
        <shortName evidence="1">Glc2-DAG synthase</shortName>
    </alternativeName>
    <alternativeName>
        <fullName evidence="1">Beta-gentiobiosyldiacylglycerol synthase</fullName>
    </alternativeName>
    <alternativeName>
        <fullName evidence="1">Beta-monoglucosyldiacylglycerol synthase</fullName>
        <shortName evidence="1">Beta-MGS</shortName>
        <shortName evidence="1">MGlcDAG synthase</shortName>
    </alternativeName>
    <alternativeName>
        <fullName>Diglucosyl diacylglycerol synthase (1,6-linking)</fullName>
    </alternativeName>
    <alternativeName>
        <fullName evidence="1">Glucosyl-beta-1,6-glucosyldiacylglycerol synthase</fullName>
    </alternativeName>
    <alternativeName>
        <fullName evidence="1">UDP glucosyltransferase</fullName>
    </alternativeName>
    <alternativeName>
        <fullName evidence="1">UDP-glucose:1,2-diacylglycerol-3-beta-D-glucosyltransferase</fullName>
    </alternativeName>
</protein>
<reference key="1">
    <citation type="journal article" date="2005" name="J. Bacteriol.">
        <title>Insights on evolution of virulence and resistance from the complete genome analysis of an early methicillin-resistant Staphylococcus aureus strain and a biofilm-producing methicillin-resistant Staphylococcus epidermidis strain.</title>
        <authorList>
            <person name="Gill S.R."/>
            <person name="Fouts D.E."/>
            <person name="Archer G.L."/>
            <person name="Mongodin E.F."/>
            <person name="DeBoy R.T."/>
            <person name="Ravel J."/>
            <person name="Paulsen I.T."/>
            <person name="Kolonay J.F."/>
            <person name="Brinkac L.M."/>
            <person name="Beanan M.J."/>
            <person name="Dodson R.J."/>
            <person name="Daugherty S.C."/>
            <person name="Madupu R."/>
            <person name="Angiuoli S.V."/>
            <person name="Durkin A.S."/>
            <person name="Haft D.H."/>
            <person name="Vamathevan J.J."/>
            <person name="Khouri H."/>
            <person name="Utterback T.R."/>
            <person name="Lee C."/>
            <person name="Dimitrov G."/>
            <person name="Jiang L."/>
            <person name="Qin H."/>
            <person name="Weidman J."/>
            <person name="Tran K."/>
            <person name="Kang K.H."/>
            <person name="Hance I.R."/>
            <person name="Nelson K.E."/>
            <person name="Fraser C.M."/>
        </authorList>
    </citation>
    <scope>NUCLEOTIDE SEQUENCE [LARGE SCALE GENOMIC DNA]</scope>
    <source>
        <strain>ATCC 35984 / DSM 28319 / BCRC 17069 / CCUG 31568 / BM 3577 / RP62A</strain>
    </source>
</reference>
<gene>
    <name evidence="1" type="primary">ugtP</name>
    <name type="ordered locus">SERP0606</name>
</gene>
<comment type="function">
    <text evidence="1">Processive glucosyltransferase involved in the biosynthesis of both the bilayer- and non-bilayer-forming membrane glucolipids. Is able to successively transfer two glucosyl residues to diacylglycerol (DAG), thereby catalyzing the formation of beta-monoglucosyl-DAG (3-O-(beta-D-glucopyranosyl)-1,2-diacyl-sn-glycerol) and beta-diglucosyl-DAG (3-O-(beta-D-glucopyranosyl-beta-(1-&gt;6)-D-glucopyranosyl)-1,2-diacyl-sn-glycerol). Beta-diglucosyl-DAG is the predominant glycolipid found in Bacillales and is also used as a membrane anchor for lipoteichoic acid (LTA).</text>
</comment>
<comment type="catalytic activity">
    <reaction>
        <text>a 1,2-diacyl-3-O-(beta-D-glucopyranosyl)-sn-glycerol + UDP-alpha-D-glucose = a 1,2-diacyl-3-O-(beta-D-Glc-(1-&gt;6)-beta-D-Glc)-sn-glycerol + UDP + H(+)</text>
        <dbReference type="Rhea" id="RHEA:39031"/>
        <dbReference type="ChEBI" id="CHEBI:15378"/>
        <dbReference type="ChEBI" id="CHEBI:58223"/>
        <dbReference type="ChEBI" id="CHEBI:58885"/>
        <dbReference type="ChEBI" id="CHEBI:75799"/>
        <dbReference type="ChEBI" id="CHEBI:76264"/>
        <dbReference type="EC" id="2.4.1.315"/>
    </reaction>
</comment>
<comment type="catalytic activity">
    <reaction evidence="1">
        <text>a 1,2-diacyl-sn-glycerol + UDP-alpha-D-glucose = a 1,2-diacyl-3-O-(beta-D-glucopyranosyl)-sn-glycerol + UDP + H(+)</text>
        <dbReference type="Rhea" id="RHEA:17285"/>
        <dbReference type="ChEBI" id="CHEBI:15378"/>
        <dbReference type="ChEBI" id="CHEBI:17815"/>
        <dbReference type="ChEBI" id="CHEBI:58223"/>
        <dbReference type="ChEBI" id="CHEBI:58885"/>
        <dbReference type="ChEBI" id="CHEBI:75799"/>
    </reaction>
</comment>
<comment type="pathway">
    <text evidence="1">Glycolipid metabolism; diglucosyl-diacylglycerol biosynthesis.</text>
</comment>
<comment type="subcellular location">
    <subcellularLocation>
        <location evidence="1">Cell membrane</location>
    </subcellularLocation>
</comment>
<comment type="similarity">
    <text evidence="1">Belongs to the glycosyltransferase 28 family. UgtP subfamily.</text>
</comment>
<organism>
    <name type="scientific">Staphylococcus epidermidis (strain ATCC 35984 / DSM 28319 / BCRC 17069 / CCUG 31568 / BM 3577 / RP62A)</name>
    <dbReference type="NCBI Taxonomy" id="176279"/>
    <lineage>
        <taxon>Bacteria</taxon>
        <taxon>Bacillati</taxon>
        <taxon>Bacillota</taxon>
        <taxon>Bacilli</taxon>
        <taxon>Bacillales</taxon>
        <taxon>Staphylococcaceae</taxon>
        <taxon>Staphylococcus</taxon>
    </lineage>
</organism>
<keyword id="KW-0119">Carbohydrate metabolism</keyword>
<keyword id="KW-1003">Cell membrane</keyword>
<keyword id="KW-0328">Glycosyltransferase</keyword>
<keyword id="KW-0444">Lipid biosynthesis</keyword>
<keyword id="KW-0443">Lipid metabolism</keyword>
<keyword id="KW-0472">Membrane</keyword>
<keyword id="KW-1185">Reference proteome</keyword>
<keyword id="KW-0808">Transferase</keyword>
<name>UGTP_STAEQ</name>
<sequence>MVTQNKKILIITGSFGNGHMQVTQSIVNQLNEMNLNHLSVIQHDLFMEAHPIMTSICKKWYINSFKYFRNTYKRFYYSRPNELDKCFYKYYGLNKLINLLIKEKPDLILLTFPTPVMSVLTEQFNINIPIATVMTDYRMHKNWITPYSQRYYVATKDTKDDFIEAGVPASYIKVTGIPIADKFEESIDKEEWLSQQHLDPSKPTILMSAGAFGVSKGFDYMINNILEKSPNSQVVMICGRSKELKRSLKAKFKDNPSVIILGYTNHMNEWMASSQLMITKPGGITISEGLSRCIPMIFLNPAPGQELENAYYFESKGFGKIADTPNEAIDIVSDLTNNEETLKVMSSKMLESKVGYSTRKICKDLLDLIGHSSQPDEIYGKVPLYARFFVK</sequence>
<dbReference type="EC" id="2.4.1.315"/>
<dbReference type="EMBL" id="CP000029">
    <property type="protein sequence ID" value="AAW54032.1"/>
    <property type="molecule type" value="Genomic_DNA"/>
</dbReference>
<dbReference type="RefSeq" id="WP_001829298.1">
    <property type="nucleotide sequence ID" value="NC_002976.3"/>
</dbReference>
<dbReference type="SMR" id="Q5HQE7"/>
<dbReference type="STRING" id="176279.SERP0606"/>
<dbReference type="CAZy" id="GT28">
    <property type="family name" value="Glycosyltransferase Family 28"/>
</dbReference>
<dbReference type="KEGG" id="ser:SERP0606"/>
<dbReference type="eggNOG" id="COG0707">
    <property type="taxonomic scope" value="Bacteria"/>
</dbReference>
<dbReference type="HOGENOM" id="CLU_028367_0_1_9"/>
<dbReference type="UniPathway" id="UPA00894"/>
<dbReference type="Proteomes" id="UP000000531">
    <property type="component" value="Chromosome"/>
</dbReference>
<dbReference type="GO" id="GO:0005886">
    <property type="term" value="C:plasma membrane"/>
    <property type="evidence" value="ECO:0007669"/>
    <property type="project" value="UniProtKB-SubCell"/>
</dbReference>
<dbReference type="GO" id="GO:0047228">
    <property type="term" value="F:1,2-diacylglycerol 3-glucosyltransferase activity"/>
    <property type="evidence" value="ECO:0007669"/>
    <property type="project" value="UniProtKB-UniRule"/>
</dbReference>
<dbReference type="GO" id="GO:0009246">
    <property type="term" value="P:enterobacterial common antigen biosynthetic process"/>
    <property type="evidence" value="ECO:0007669"/>
    <property type="project" value="UniProtKB-UniPathway"/>
</dbReference>
<dbReference type="GO" id="GO:0009247">
    <property type="term" value="P:glycolipid biosynthetic process"/>
    <property type="evidence" value="ECO:0007669"/>
    <property type="project" value="UniProtKB-UniRule"/>
</dbReference>
<dbReference type="GO" id="GO:0070395">
    <property type="term" value="P:lipoteichoic acid biosynthetic process"/>
    <property type="evidence" value="ECO:0007669"/>
    <property type="project" value="UniProtKB-UniRule"/>
</dbReference>
<dbReference type="CDD" id="cd17507">
    <property type="entry name" value="GT28_Beta-DGS-like"/>
    <property type="match status" value="1"/>
</dbReference>
<dbReference type="Gene3D" id="3.40.50.2000">
    <property type="entry name" value="Glycogen Phosphorylase B"/>
    <property type="match status" value="1"/>
</dbReference>
<dbReference type="HAMAP" id="MF_01280">
    <property type="entry name" value="Diacylglyc_glucosyltr"/>
    <property type="match status" value="1"/>
</dbReference>
<dbReference type="InterPro" id="IPR009695">
    <property type="entry name" value="Diacylglyc_glucosyltr_N"/>
</dbReference>
<dbReference type="InterPro" id="IPR007235">
    <property type="entry name" value="Glyco_trans_28_C"/>
</dbReference>
<dbReference type="InterPro" id="IPR050519">
    <property type="entry name" value="Glycosyltransf_28_UgtP"/>
</dbReference>
<dbReference type="InterPro" id="IPR023589">
    <property type="entry name" value="Pro_diacylglycrl_glcsylTrfase"/>
</dbReference>
<dbReference type="NCBIfam" id="NF010134">
    <property type="entry name" value="PRK13608.1"/>
    <property type="match status" value="1"/>
</dbReference>
<dbReference type="PANTHER" id="PTHR43025">
    <property type="entry name" value="MONOGALACTOSYLDIACYLGLYCEROL SYNTHASE"/>
    <property type="match status" value="1"/>
</dbReference>
<dbReference type="PANTHER" id="PTHR43025:SF3">
    <property type="entry name" value="MONOGALACTOSYLDIACYLGLYCEROL SYNTHASE 1, CHLOROPLASTIC"/>
    <property type="match status" value="1"/>
</dbReference>
<dbReference type="Pfam" id="PF04101">
    <property type="entry name" value="Glyco_tran_28_C"/>
    <property type="match status" value="1"/>
</dbReference>
<dbReference type="Pfam" id="PF06925">
    <property type="entry name" value="MGDG_synth"/>
    <property type="match status" value="1"/>
</dbReference>
<dbReference type="SUPFAM" id="SSF53756">
    <property type="entry name" value="UDP-Glycosyltransferase/glycogen phosphorylase"/>
    <property type="match status" value="1"/>
</dbReference>